<feature type="chain" id="PRO_0000182222" description="Putative arginine deiminase">
    <location>
        <begin position="1"/>
        <end position="404"/>
    </location>
</feature>
<feature type="active site" description="Amidino-cysteine intermediate" evidence="1">
    <location>
        <position position="394"/>
    </location>
</feature>
<keyword id="KW-0056">Arginine metabolism</keyword>
<keyword id="KW-0963">Cytoplasm</keyword>
<keyword id="KW-0378">Hydrolase</keyword>
<keyword id="KW-1185">Reference proteome</keyword>
<protein>
    <recommendedName>
        <fullName>Putative arginine deiminase</fullName>
        <shortName>ADI</shortName>
        <ecNumber>3.5.3.6</ecNumber>
    </recommendedName>
    <alternativeName>
        <fullName>Arginine dihydrolase</fullName>
        <shortName>AD</shortName>
    </alternativeName>
</protein>
<dbReference type="EC" id="3.5.3.6"/>
<dbReference type="EMBL" id="U00089">
    <property type="protein sequence ID" value="AAB96180.1"/>
    <property type="status" value="ALT_FRAME"/>
    <property type="molecule type" value="Genomic_DNA"/>
</dbReference>
<dbReference type="EMBL" id="U00089">
    <property type="protein sequence ID" value="AAB96179.1"/>
    <property type="status" value="ALT_FRAME"/>
    <property type="molecule type" value="Genomic_DNA"/>
</dbReference>
<dbReference type="PIR" id="S73857">
    <property type="entry name" value="S73857"/>
</dbReference>
<dbReference type="PIR" id="S73858">
    <property type="entry name" value="S73858"/>
</dbReference>
<dbReference type="SMR" id="P75475"/>
<dbReference type="IntAct" id="P75475">
    <property type="interactions" value="1"/>
</dbReference>
<dbReference type="STRING" id="272634.MPN_305"/>
<dbReference type="EnsemblBacteria" id="AAB96179">
    <property type="protein sequence ID" value="AAB96179"/>
    <property type="gene ID" value="MPN_305"/>
</dbReference>
<dbReference type="EnsemblBacteria" id="AAB96180">
    <property type="protein sequence ID" value="AAB96180"/>
    <property type="gene ID" value="MPN_304"/>
</dbReference>
<dbReference type="KEGG" id="mpn:MPN_304"/>
<dbReference type="KEGG" id="mpn:MPN_305"/>
<dbReference type="HOGENOM" id="CLU_052662_1_0_14"/>
<dbReference type="UniPathway" id="UPA00254">
    <property type="reaction ID" value="UER00364"/>
</dbReference>
<dbReference type="Proteomes" id="UP000000808">
    <property type="component" value="Chromosome"/>
</dbReference>
<dbReference type="GO" id="GO:0005737">
    <property type="term" value="C:cytoplasm"/>
    <property type="evidence" value="ECO:0007669"/>
    <property type="project" value="UniProtKB-SubCell"/>
</dbReference>
<dbReference type="GO" id="GO:0016990">
    <property type="term" value="F:arginine deiminase activity"/>
    <property type="evidence" value="ECO:0007669"/>
    <property type="project" value="UniProtKB-UniRule"/>
</dbReference>
<dbReference type="GO" id="GO:0019547">
    <property type="term" value="P:arginine catabolic process to ornithine"/>
    <property type="evidence" value="ECO:0007669"/>
    <property type="project" value="UniProtKB-UniRule"/>
</dbReference>
<dbReference type="GO" id="GO:0019546">
    <property type="term" value="P:arginine deiminase pathway"/>
    <property type="evidence" value="ECO:0007669"/>
    <property type="project" value="TreeGrafter"/>
</dbReference>
<dbReference type="Gene3D" id="1.10.3930.10">
    <property type="entry name" value="Arginine deiminase"/>
    <property type="match status" value="1"/>
</dbReference>
<dbReference type="Gene3D" id="3.75.10.10">
    <property type="entry name" value="L-arginine/glycine Amidinotransferase, Chain A"/>
    <property type="match status" value="1"/>
</dbReference>
<dbReference type="HAMAP" id="MF_00242">
    <property type="entry name" value="Arg_deiminase"/>
    <property type="match status" value="1"/>
</dbReference>
<dbReference type="InterPro" id="IPR003876">
    <property type="entry name" value="Arg_deiminase"/>
</dbReference>
<dbReference type="PANTHER" id="PTHR47271">
    <property type="entry name" value="ARGININE DEIMINASE"/>
    <property type="match status" value="1"/>
</dbReference>
<dbReference type="PANTHER" id="PTHR47271:SF2">
    <property type="entry name" value="ARGININE DEIMINASE"/>
    <property type="match status" value="1"/>
</dbReference>
<dbReference type="Pfam" id="PF02274">
    <property type="entry name" value="ADI"/>
    <property type="match status" value="1"/>
</dbReference>
<dbReference type="PIRSF" id="PIRSF006356">
    <property type="entry name" value="Arg_deiminase"/>
    <property type="match status" value="1"/>
</dbReference>
<dbReference type="PRINTS" id="PR01466">
    <property type="entry name" value="ARGDEIMINASE"/>
</dbReference>
<dbReference type="SUPFAM" id="SSF55909">
    <property type="entry name" value="Pentein"/>
    <property type="match status" value="1"/>
</dbReference>
<proteinExistence type="inferred from homology"/>
<reference key="1">
    <citation type="journal article" date="1996" name="Nucleic Acids Res.">
        <title>Complete sequence analysis of the genome of the bacterium Mycoplasma pneumoniae.</title>
        <authorList>
            <person name="Himmelreich R."/>
            <person name="Hilbert H."/>
            <person name="Plagens H."/>
            <person name="Pirkl E."/>
            <person name="Li B.-C."/>
            <person name="Herrmann R."/>
        </authorList>
    </citation>
    <scope>NUCLEOTIDE SEQUENCE [LARGE SCALE GENOMIC DNA]</scope>
    <source>
        <strain>ATCC 29342 / M129 / Subtype 1</strain>
    </source>
</reference>
<accession>P75475</accession>
<accession>P75474</accession>
<organism>
    <name type="scientific">Mycoplasma pneumoniae (strain ATCC 29342 / M129 / Subtype 1)</name>
    <name type="common">Mycoplasmoides pneumoniae</name>
    <dbReference type="NCBI Taxonomy" id="272634"/>
    <lineage>
        <taxon>Bacteria</taxon>
        <taxon>Bacillati</taxon>
        <taxon>Mycoplasmatota</taxon>
        <taxon>Mycoplasmoidales</taxon>
        <taxon>Mycoplasmoidaceae</taxon>
        <taxon>Mycoplasmoides</taxon>
    </lineage>
</organism>
<evidence type="ECO:0000250" key="1"/>
<evidence type="ECO:0000305" key="2"/>
<name>ARCA_MYCPN</name>
<sequence length="404" mass="45479">MKYNINVHSEIGQLQTVLVHTPGNEIRRISPRRLDDLLFSAVIEPDTAIQEHQTFCQLLQEQNIEVVQLTDLTATTFDKANATAQNQFIETWLDQAEPKLTPEHRKVAKQYLLEQKAKSTLSMVRSMMGGIDKRKVAAANTINGDFLVDPMPNLYFTRDPFASIGHGISINRMKYLTRRRETLFASFIFANHPIIAARKFYFKPIDMGTIEGGDIFVYDQQTVVMGLSERTTEAAINVLAKKIQQDSSTSFKRIFVINVPQLPNLMHLDTWLTMLDRNKFLYSPNMLAVLKAWRIDFTDPALKWNEIAGDLSTILHTIIGQKPMLIPIAGADANQTEIDIETHFDGTNYLTIAPSVVVGYARNKLTHQTLEAAGVKVIAFKGNQLSLGMGSARCMSMPLVRKPL</sequence>
<gene>
    <name type="primary">arcA</name>
    <name type="ordered locus">MPN_304/MPN_305</name>
    <name type="ORF">MP531/MP532</name>
</gene>
<comment type="catalytic activity">
    <reaction>
        <text>L-arginine + H2O = L-citrulline + NH4(+)</text>
        <dbReference type="Rhea" id="RHEA:19597"/>
        <dbReference type="ChEBI" id="CHEBI:15377"/>
        <dbReference type="ChEBI" id="CHEBI:28938"/>
        <dbReference type="ChEBI" id="CHEBI:32682"/>
        <dbReference type="ChEBI" id="CHEBI:57743"/>
        <dbReference type="EC" id="3.5.3.6"/>
    </reaction>
</comment>
<comment type="pathway">
    <text>Amino-acid degradation; L-arginine degradation via ADI pathway; carbamoyl phosphate from L-arginine: step 1/2.</text>
</comment>
<comment type="subcellular location">
    <subcellularLocation>
        <location evidence="2">Cytoplasm</location>
    </subcellularLocation>
</comment>
<comment type="similarity">
    <text evidence="2">Belongs to the arginine deiminase family.</text>
</comment>
<comment type="sequence caution" evidence="2">
    <conflict type="frameshift">
        <sequence resource="EMBL-CDS" id="AAB96179"/>
    </conflict>
    <text>Produces two separate ORFs.</text>
</comment>
<comment type="sequence caution" evidence="2">
    <conflict type="frameshift">
        <sequence resource="EMBL-CDS" id="AAB96180"/>
    </conflict>
    <text>Produces two separate ORFs.</text>
</comment>